<proteinExistence type="inferred from homology"/>
<gene>
    <name evidence="1" type="primary">ligA</name>
    <name type="ordered locus">TGRD_421</name>
</gene>
<evidence type="ECO:0000255" key="1">
    <source>
        <dbReference type="HAMAP-Rule" id="MF_01588"/>
    </source>
</evidence>
<accession>B1H072</accession>
<reference key="1">
    <citation type="journal article" date="2008" name="Proc. Natl. Acad. Sci. U.S.A.">
        <title>Complete genome of the uncultured termite group 1 bacteria in a single host protist cell.</title>
        <authorList>
            <person name="Hongoh Y."/>
            <person name="Sharma V.K."/>
            <person name="Prakash T."/>
            <person name="Noda S."/>
            <person name="Taylor T.D."/>
            <person name="Kudo T."/>
            <person name="Sakaki Y."/>
            <person name="Toyoda A."/>
            <person name="Hattori M."/>
            <person name="Ohkuma M."/>
        </authorList>
    </citation>
    <scope>NUCLEOTIDE SEQUENCE [LARGE SCALE GENOMIC DNA]</scope>
</reference>
<protein>
    <recommendedName>
        <fullName evidence="1">DNA ligase</fullName>
        <ecNumber evidence="1">6.5.1.2</ecNumber>
    </recommendedName>
    <alternativeName>
        <fullName evidence="1">Polydeoxyribonucleotide synthase [NAD(+)]</fullName>
    </alternativeName>
</protein>
<sequence length="674" mass="76318">MIMGNIQNRIDYLRKELIRHNGLYYESNNPEISDSEYDNLAKELEQIEKENPLFALPDSPTKKISGFVSSSFEQIKHSSPMLSLDNTYSQKETAKWYERIEKNLNNKNTEFTIEPKIDGVSASLTYINGSLTAGATRGDGETGEDITENIKKVKNIPYKLKADNPPYFFELRGEVYIDKSDFRKLNEEILMSVGQKFANSRNAASGSLRQKNPQITAERKLRFFVHSLGKIDGKQFESQSDFLQYCRKCGFQLQDNFKICHSLKEIMDFMEIMINNRDLLHYEIDGLVIKVNSLQLQKELGYTNKSPRWAIAFKFPAKQATTKLSRIRVQVGRTGIITPSAILESVTLAGVTISHATLHNFEEIERLNVNEGDTVLIERAGDVIPKIVKVVKKENRGFFKPPHNCPSCNSGIVKENEEEVAYRCINPECPAQFRRHLIHFVSRNAMDIDGFGKAVIDQFLDRKKIQVLADIYYLKYDDFIKLDLFKEKKTSNLMKAVAASKKHPLSKLLFALGIRRIGEKVSEIIAKKFKSMEALFNASIEDFTRVPEIGSILALSLKEFFENKTVRNVIDNLIAAGVNMIEPEAEQSGTQFDGKMFVLTGELKNHTREQAGKIIRSLGGKVASSVSKKTDYIVAGVNAGSKLKKAKELNVKIVDEAEFDILTGKLSLIENTKF</sequence>
<feature type="chain" id="PRO_0000380501" description="DNA ligase">
    <location>
        <begin position="1"/>
        <end position="674"/>
    </location>
</feature>
<feature type="domain" description="BRCT" evidence="1">
    <location>
        <begin position="587"/>
        <end position="674"/>
    </location>
</feature>
<feature type="active site" description="N6-AMP-lysine intermediate" evidence="1">
    <location>
        <position position="116"/>
    </location>
</feature>
<feature type="binding site" evidence="1">
    <location>
        <begin position="34"/>
        <end position="38"/>
    </location>
    <ligand>
        <name>NAD(+)</name>
        <dbReference type="ChEBI" id="CHEBI:57540"/>
    </ligand>
</feature>
<feature type="binding site" evidence="1">
    <location>
        <begin position="83"/>
        <end position="84"/>
    </location>
    <ligand>
        <name>NAD(+)</name>
        <dbReference type="ChEBI" id="CHEBI:57540"/>
    </ligand>
</feature>
<feature type="binding site" evidence="1">
    <location>
        <position position="114"/>
    </location>
    <ligand>
        <name>NAD(+)</name>
        <dbReference type="ChEBI" id="CHEBI:57540"/>
    </ligand>
</feature>
<feature type="binding site" evidence="1">
    <location>
        <position position="137"/>
    </location>
    <ligand>
        <name>NAD(+)</name>
        <dbReference type="ChEBI" id="CHEBI:57540"/>
    </ligand>
</feature>
<feature type="binding site" evidence="1">
    <location>
        <position position="174"/>
    </location>
    <ligand>
        <name>NAD(+)</name>
        <dbReference type="ChEBI" id="CHEBI:57540"/>
    </ligand>
</feature>
<feature type="binding site" evidence="1">
    <location>
        <position position="290"/>
    </location>
    <ligand>
        <name>NAD(+)</name>
        <dbReference type="ChEBI" id="CHEBI:57540"/>
    </ligand>
</feature>
<feature type="binding site" evidence="1">
    <location>
        <position position="314"/>
    </location>
    <ligand>
        <name>NAD(+)</name>
        <dbReference type="ChEBI" id="CHEBI:57540"/>
    </ligand>
</feature>
<feature type="binding site" evidence="1">
    <location>
        <position position="405"/>
    </location>
    <ligand>
        <name>Zn(2+)</name>
        <dbReference type="ChEBI" id="CHEBI:29105"/>
    </ligand>
</feature>
<feature type="binding site" evidence="1">
    <location>
        <position position="408"/>
    </location>
    <ligand>
        <name>Zn(2+)</name>
        <dbReference type="ChEBI" id="CHEBI:29105"/>
    </ligand>
</feature>
<feature type="binding site" evidence="1">
    <location>
        <position position="424"/>
    </location>
    <ligand>
        <name>Zn(2+)</name>
        <dbReference type="ChEBI" id="CHEBI:29105"/>
    </ligand>
</feature>
<feature type="binding site" evidence="1">
    <location>
        <position position="429"/>
    </location>
    <ligand>
        <name>Zn(2+)</name>
        <dbReference type="ChEBI" id="CHEBI:29105"/>
    </ligand>
</feature>
<name>DNLJ_ENDTX</name>
<comment type="function">
    <text evidence="1">DNA ligase that catalyzes the formation of phosphodiester linkages between 5'-phosphoryl and 3'-hydroxyl groups in double-stranded DNA using NAD as a coenzyme and as the energy source for the reaction. It is essential for DNA replication and repair of damaged DNA.</text>
</comment>
<comment type="catalytic activity">
    <reaction evidence="1">
        <text>NAD(+) + (deoxyribonucleotide)n-3'-hydroxyl + 5'-phospho-(deoxyribonucleotide)m = (deoxyribonucleotide)n+m + AMP + beta-nicotinamide D-nucleotide.</text>
        <dbReference type="EC" id="6.5.1.2"/>
    </reaction>
</comment>
<comment type="cofactor">
    <cofactor evidence="1">
        <name>Mg(2+)</name>
        <dbReference type="ChEBI" id="CHEBI:18420"/>
    </cofactor>
    <cofactor evidence="1">
        <name>Mn(2+)</name>
        <dbReference type="ChEBI" id="CHEBI:29035"/>
    </cofactor>
</comment>
<comment type="similarity">
    <text evidence="1">Belongs to the NAD-dependent DNA ligase family. LigA subfamily.</text>
</comment>
<organism>
    <name type="scientific">Endomicrobium trichonymphae</name>
    <dbReference type="NCBI Taxonomy" id="1408204"/>
    <lineage>
        <taxon>Bacteria</taxon>
        <taxon>Pseudomonadati</taxon>
        <taxon>Elusimicrobiota</taxon>
        <taxon>Endomicrobiia</taxon>
        <taxon>Endomicrobiales</taxon>
        <taxon>Endomicrobiaceae</taxon>
        <taxon>Candidatus Endomicrobiellum</taxon>
    </lineage>
</organism>
<keyword id="KW-0227">DNA damage</keyword>
<keyword id="KW-0234">DNA repair</keyword>
<keyword id="KW-0235">DNA replication</keyword>
<keyword id="KW-0436">Ligase</keyword>
<keyword id="KW-0460">Magnesium</keyword>
<keyword id="KW-0464">Manganese</keyword>
<keyword id="KW-0479">Metal-binding</keyword>
<keyword id="KW-0520">NAD</keyword>
<keyword id="KW-0862">Zinc</keyword>
<dbReference type="EC" id="6.5.1.2" evidence="1"/>
<dbReference type="EMBL" id="AP009510">
    <property type="protein sequence ID" value="BAG13904.1"/>
    <property type="molecule type" value="Genomic_DNA"/>
</dbReference>
<dbReference type="RefSeq" id="WP_015423430.1">
    <property type="nucleotide sequence ID" value="NC_020419.1"/>
</dbReference>
<dbReference type="SMR" id="B1H072"/>
<dbReference type="STRING" id="471821.TGRD_421"/>
<dbReference type="KEGG" id="rsd:TGRD_421"/>
<dbReference type="PATRIC" id="fig|471821.5.peg.683"/>
<dbReference type="HOGENOM" id="CLU_007764_2_1_0"/>
<dbReference type="Proteomes" id="UP000001691">
    <property type="component" value="Chromosome"/>
</dbReference>
<dbReference type="GO" id="GO:0005829">
    <property type="term" value="C:cytosol"/>
    <property type="evidence" value="ECO:0007669"/>
    <property type="project" value="TreeGrafter"/>
</dbReference>
<dbReference type="GO" id="GO:0003911">
    <property type="term" value="F:DNA ligase (NAD+) activity"/>
    <property type="evidence" value="ECO:0007669"/>
    <property type="project" value="UniProtKB-UniRule"/>
</dbReference>
<dbReference type="GO" id="GO:0046872">
    <property type="term" value="F:metal ion binding"/>
    <property type="evidence" value="ECO:0007669"/>
    <property type="project" value="UniProtKB-KW"/>
</dbReference>
<dbReference type="GO" id="GO:0006281">
    <property type="term" value="P:DNA repair"/>
    <property type="evidence" value="ECO:0007669"/>
    <property type="project" value="UniProtKB-KW"/>
</dbReference>
<dbReference type="GO" id="GO:0006260">
    <property type="term" value="P:DNA replication"/>
    <property type="evidence" value="ECO:0007669"/>
    <property type="project" value="UniProtKB-KW"/>
</dbReference>
<dbReference type="CDD" id="cd17748">
    <property type="entry name" value="BRCT_DNA_ligase_like"/>
    <property type="match status" value="1"/>
</dbReference>
<dbReference type="CDD" id="cd00114">
    <property type="entry name" value="LIGANc"/>
    <property type="match status" value="1"/>
</dbReference>
<dbReference type="FunFam" id="1.10.150.20:FF:000006">
    <property type="entry name" value="DNA ligase"/>
    <property type="match status" value="1"/>
</dbReference>
<dbReference type="FunFam" id="1.10.150.20:FF:000007">
    <property type="entry name" value="DNA ligase"/>
    <property type="match status" value="1"/>
</dbReference>
<dbReference type="FunFam" id="2.40.50.140:FF:000012">
    <property type="entry name" value="DNA ligase"/>
    <property type="match status" value="1"/>
</dbReference>
<dbReference type="FunFam" id="3.30.470.30:FF:000001">
    <property type="entry name" value="DNA ligase"/>
    <property type="match status" value="1"/>
</dbReference>
<dbReference type="Gene3D" id="6.20.10.30">
    <property type="match status" value="1"/>
</dbReference>
<dbReference type="Gene3D" id="1.10.150.20">
    <property type="entry name" value="5' to 3' exonuclease, C-terminal subdomain"/>
    <property type="match status" value="2"/>
</dbReference>
<dbReference type="Gene3D" id="3.40.50.10190">
    <property type="entry name" value="BRCT domain"/>
    <property type="match status" value="1"/>
</dbReference>
<dbReference type="Gene3D" id="3.30.470.30">
    <property type="entry name" value="DNA ligase/mRNA capping enzyme"/>
    <property type="match status" value="1"/>
</dbReference>
<dbReference type="Gene3D" id="1.10.287.610">
    <property type="entry name" value="Helix hairpin bin"/>
    <property type="match status" value="1"/>
</dbReference>
<dbReference type="Gene3D" id="2.40.50.140">
    <property type="entry name" value="Nucleic acid-binding proteins"/>
    <property type="match status" value="1"/>
</dbReference>
<dbReference type="HAMAP" id="MF_01588">
    <property type="entry name" value="DNA_ligase_A"/>
    <property type="match status" value="1"/>
</dbReference>
<dbReference type="InterPro" id="IPR001357">
    <property type="entry name" value="BRCT_dom"/>
</dbReference>
<dbReference type="InterPro" id="IPR036420">
    <property type="entry name" value="BRCT_dom_sf"/>
</dbReference>
<dbReference type="InterPro" id="IPR041663">
    <property type="entry name" value="DisA/LigA_HHH"/>
</dbReference>
<dbReference type="InterPro" id="IPR001679">
    <property type="entry name" value="DNA_ligase"/>
</dbReference>
<dbReference type="InterPro" id="IPR018239">
    <property type="entry name" value="DNA_ligase_AS"/>
</dbReference>
<dbReference type="InterPro" id="IPR013839">
    <property type="entry name" value="DNAligase_adenylation"/>
</dbReference>
<dbReference type="InterPro" id="IPR013840">
    <property type="entry name" value="DNAligase_N"/>
</dbReference>
<dbReference type="InterPro" id="IPR012340">
    <property type="entry name" value="NA-bd_OB-fold"/>
</dbReference>
<dbReference type="InterPro" id="IPR004150">
    <property type="entry name" value="NAD_DNA_ligase_OB"/>
</dbReference>
<dbReference type="InterPro" id="IPR010994">
    <property type="entry name" value="RuvA_2-like"/>
</dbReference>
<dbReference type="InterPro" id="IPR004149">
    <property type="entry name" value="Znf_DNAligase_C4"/>
</dbReference>
<dbReference type="NCBIfam" id="TIGR00575">
    <property type="entry name" value="dnlj"/>
    <property type="match status" value="1"/>
</dbReference>
<dbReference type="NCBIfam" id="NF005932">
    <property type="entry name" value="PRK07956.1"/>
    <property type="match status" value="1"/>
</dbReference>
<dbReference type="PANTHER" id="PTHR23389">
    <property type="entry name" value="CHROMOSOME TRANSMISSION FIDELITY FACTOR 18"/>
    <property type="match status" value="1"/>
</dbReference>
<dbReference type="PANTHER" id="PTHR23389:SF9">
    <property type="entry name" value="DNA LIGASE"/>
    <property type="match status" value="1"/>
</dbReference>
<dbReference type="Pfam" id="PF00533">
    <property type="entry name" value="BRCT"/>
    <property type="match status" value="1"/>
</dbReference>
<dbReference type="Pfam" id="PF01653">
    <property type="entry name" value="DNA_ligase_aden"/>
    <property type="match status" value="1"/>
</dbReference>
<dbReference type="Pfam" id="PF03120">
    <property type="entry name" value="DNA_ligase_OB"/>
    <property type="match status" value="1"/>
</dbReference>
<dbReference type="Pfam" id="PF03119">
    <property type="entry name" value="DNA_ligase_ZBD"/>
    <property type="match status" value="1"/>
</dbReference>
<dbReference type="Pfam" id="PF12826">
    <property type="entry name" value="HHH_2"/>
    <property type="match status" value="1"/>
</dbReference>
<dbReference type="Pfam" id="PF22745">
    <property type="entry name" value="Nlig-Ia"/>
    <property type="match status" value="1"/>
</dbReference>
<dbReference type="PIRSF" id="PIRSF001604">
    <property type="entry name" value="LigA"/>
    <property type="match status" value="1"/>
</dbReference>
<dbReference type="SMART" id="SM00292">
    <property type="entry name" value="BRCT"/>
    <property type="match status" value="1"/>
</dbReference>
<dbReference type="SMART" id="SM00532">
    <property type="entry name" value="LIGANc"/>
    <property type="match status" value="1"/>
</dbReference>
<dbReference type="SUPFAM" id="SSF52113">
    <property type="entry name" value="BRCT domain"/>
    <property type="match status" value="1"/>
</dbReference>
<dbReference type="SUPFAM" id="SSF56091">
    <property type="entry name" value="DNA ligase/mRNA capping enzyme, catalytic domain"/>
    <property type="match status" value="1"/>
</dbReference>
<dbReference type="SUPFAM" id="SSF50249">
    <property type="entry name" value="Nucleic acid-binding proteins"/>
    <property type="match status" value="1"/>
</dbReference>
<dbReference type="SUPFAM" id="SSF47781">
    <property type="entry name" value="RuvA domain 2-like"/>
    <property type="match status" value="1"/>
</dbReference>
<dbReference type="PROSITE" id="PS50172">
    <property type="entry name" value="BRCT"/>
    <property type="match status" value="1"/>
</dbReference>
<dbReference type="PROSITE" id="PS01055">
    <property type="entry name" value="DNA_LIGASE_N1"/>
    <property type="match status" value="1"/>
</dbReference>